<dbReference type="EMBL" id="DQ534758">
    <property type="protein sequence ID" value="ABF82394.1"/>
    <property type="molecule type" value="mRNA"/>
</dbReference>
<dbReference type="CCDS" id="CCDS51744.1"/>
<dbReference type="RefSeq" id="NP_001128565.1">
    <property type="nucleotide sequence ID" value="NM_001135093.1"/>
</dbReference>
<dbReference type="SMR" id="Q19A41"/>
<dbReference type="STRING" id="10090.ENSMUSP00000099122"/>
<dbReference type="GlyGen" id="Q19A41">
    <property type="glycosylation" value="1 site"/>
</dbReference>
<dbReference type="PhosphoSitePlus" id="Q19A41"/>
<dbReference type="PaxDb" id="10090-ENSMUSP00000099122"/>
<dbReference type="ProteomicsDB" id="264948"/>
<dbReference type="Antibodypedia" id="73306">
    <property type="antibodies" value="85 antibodies from 18 providers"/>
</dbReference>
<dbReference type="Ensembl" id="ENSMUST00000101589.5">
    <property type="protein sequence ID" value="ENSMUSP00000099122.4"/>
    <property type="gene ID" value="ENSMUSG00000073209.5"/>
</dbReference>
<dbReference type="GeneID" id="619665"/>
<dbReference type="KEGG" id="mmu:619665"/>
<dbReference type="UCSC" id="uc012ejp.1">
    <property type="organism name" value="mouse"/>
</dbReference>
<dbReference type="AGR" id="MGI:3577024"/>
<dbReference type="CTD" id="136259"/>
<dbReference type="MGI" id="MGI:3577024">
    <property type="gene designation" value="Klf14"/>
</dbReference>
<dbReference type="VEuPathDB" id="HostDB:ENSMUSG00000073209"/>
<dbReference type="eggNOG" id="KOG1721">
    <property type="taxonomic scope" value="Eukaryota"/>
</dbReference>
<dbReference type="GeneTree" id="ENSGT00940000163415"/>
<dbReference type="HOGENOM" id="CLU_002678_33_2_1"/>
<dbReference type="InParanoid" id="Q19A41"/>
<dbReference type="OMA" id="CGAREDF"/>
<dbReference type="OrthoDB" id="6365676at2759"/>
<dbReference type="PhylomeDB" id="Q19A41"/>
<dbReference type="TreeFam" id="TF351003"/>
<dbReference type="BioGRID-ORCS" id="619665">
    <property type="hits" value="2 hits in 76 CRISPR screens"/>
</dbReference>
<dbReference type="ChiTaRS" id="Sp6">
    <property type="organism name" value="mouse"/>
</dbReference>
<dbReference type="PRO" id="PR:Q19A41"/>
<dbReference type="Proteomes" id="UP000000589">
    <property type="component" value="Chromosome 6"/>
</dbReference>
<dbReference type="RNAct" id="Q19A41">
    <property type="molecule type" value="protein"/>
</dbReference>
<dbReference type="Bgee" id="ENSMUSG00000073209">
    <property type="expression patterns" value="Expressed in pituitary gland and 64 other cell types or tissues"/>
</dbReference>
<dbReference type="GO" id="GO:0005634">
    <property type="term" value="C:nucleus"/>
    <property type="evidence" value="ECO:0007669"/>
    <property type="project" value="UniProtKB-SubCell"/>
</dbReference>
<dbReference type="GO" id="GO:0003682">
    <property type="term" value="F:chromatin binding"/>
    <property type="evidence" value="ECO:0000314"/>
    <property type="project" value="MGI"/>
</dbReference>
<dbReference type="GO" id="GO:0003677">
    <property type="term" value="F:DNA binding"/>
    <property type="evidence" value="ECO:0000250"/>
    <property type="project" value="MGI"/>
</dbReference>
<dbReference type="GO" id="GO:1990837">
    <property type="term" value="F:sequence-specific double-stranded DNA binding"/>
    <property type="evidence" value="ECO:0007669"/>
    <property type="project" value="Ensembl"/>
</dbReference>
<dbReference type="GO" id="GO:0008270">
    <property type="term" value="F:zinc ion binding"/>
    <property type="evidence" value="ECO:0007669"/>
    <property type="project" value="UniProtKB-KW"/>
</dbReference>
<dbReference type="GO" id="GO:1902070">
    <property type="term" value="P:positive regulation of sphingolipid mediated signaling pathway"/>
    <property type="evidence" value="ECO:0000315"/>
    <property type="project" value="MGI"/>
</dbReference>
<dbReference type="GO" id="GO:0045944">
    <property type="term" value="P:positive regulation of transcription by RNA polymerase II"/>
    <property type="evidence" value="ECO:0000316"/>
    <property type="project" value="MGI"/>
</dbReference>
<dbReference type="CDD" id="cd21576">
    <property type="entry name" value="KLF14_N"/>
    <property type="match status" value="1"/>
</dbReference>
<dbReference type="FunFam" id="3.30.160.60:FF:000595">
    <property type="entry name" value="Krueppel-like factor 14"/>
    <property type="match status" value="1"/>
</dbReference>
<dbReference type="FunFam" id="3.30.160.60:FF:000018">
    <property type="entry name" value="Krueppel-like factor 15"/>
    <property type="match status" value="1"/>
</dbReference>
<dbReference type="FunFam" id="3.30.160.60:FF:000125">
    <property type="entry name" value="Putative zinc finger protein 143"/>
    <property type="match status" value="1"/>
</dbReference>
<dbReference type="Gene3D" id="3.30.160.60">
    <property type="entry name" value="Classic Zinc Finger"/>
    <property type="match status" value="3"/>
</dbReference>
<dbReference type="InterPro" id="IPR036236">
    <property type="entry name" value="Znf_C2H2_sf"/>
</dbReference>
<dbReference type="InterPro" id="IPR013087">
    <property type="entry name" value="Znf_C2H2_type"/>
</dbReference>
<dbReference type="PANTHER" id="PTHR23235:SF59">
    <property type="entry name" value="KRUEPPEL-LIKE FACTOR 14"/>
    <property type="match status" value="1"/>
</dbReference>
<dbReference type="PANTHER" id="PTHR23235">
    <property type="entry name" value="KRUEPPEL-LIKE TRANSCRIPTION FACTOR"/>
    <property type="match status" value="1"/>
</dbReference>
<dbReference type="Pfam" id="PF00096">
    <property type="entry name" value="zf-C2H2"/>
    <property type="match status" value="2"/>
</dbReference>
<dbReference type="SMART" id="SM00355">
    <property type="entry name" value="ZnF_C2H2"/>
    <property type="match status" value="3"/>
</dbReference>
<dbReference type="SUPFAM" id="SSF57667">
    <property type="entry name" value="beta-beta-alpha zinc fingers"/>
    <property type="match status" value="2"/>
</dbReference>
<dbReference type="PROSITE" id="PS00028">
    <property type="entry name" value="ZINC_FINGER_C2H2_1"/>
    <property type="match status" value="3"/>
</dbReference>
<dbReference type="PROSITE" id="PS50157">
    <property type="entry name" value="ZINC_FINGER_C2H2_2"/>
    <property type="match status" value="3"/>
</dbReference>
<organism>
    <name type="scientific">Mus musculus</name>
    <name type="common">Mouse</name>
    <dbReference type="NCBI Taxonomy" id="10090"/>
    <lineage>
        <taxon>Eukaryota</taxon>
        <taxon>Metazoa</taxon>
        <taxon>Chordata</taxon>
        <taxon>Craniata</taxon>
        <taxon>Vertebrata</taxon>
        <taxon>Euteleostomi</taxon>
        <taxon>Mammalia</taxon>
        <taxon>Eutheria</taxon>
        <taxon>Euarchontoglires</taxon>
        <taxon>Glires</taxon>
        <taxon>Rodentia</taxon>
        <taxon>Myomorpha</taxon>
        <taxon>Muroidea</taxon>
        <taxon>Muridae</taxon>
        <taxon>Murinae</taxon>
        <taxon>Mus</taxon>
        <taxon>Mus</taxon>
    </lineage>
</organism>
<keyword id="KW-0238">DNA-binding</keyword>
<keyword id="KW-0479">Metal-binding</keyword>
<keyword id="KW-0539">Nucleus</keyword>
<keyword id="KW-1185">Reference proteome</keyword>
<keyword id="KW-0677">Repeat</keyword>
<keyword id="KW-0804">Transcription</keyword>
<keyword id="KW-0805">Transcription regulation</keyword>
<keyword id="KW-0862">Zinc</keyword>
<keyword id="KW-0863">Zinc-finger</keyword>
<sequence length="325" mass="35091">MSAAVACLDYFAAECLVSMSTRAVLHRRATDPEGASAAAVSEVGAVSRESAGKGTGSRGVLWIPPVLQVPTPSPGEGDGAPHLLAASALADLSCGAREDFREDSEEAPCASTSCFEPTWCSSPTGGSEPTQAFFEDELSDAESSCSDSAILDAPEASEEPDDSGEVPEGPPGARPAPSTGPTYRRRQITPASKRHQCSFHGCNKAYYKSSHLKSHQRTHTGERPFSCDWLDCDKKFTRSDELARHYRTHTGEKRFSCPLCPKQFSRSDHLTKHARRHPTYHPDMIEYRGRRRTPRPEPPPPAMVESSGSDSSSSSGQETSFTACL</sequence>
<evidence type="ECO:0000250" key="1"/>
<evidence type="ECO:0000255" key="2">
    <source>
        <dbReference type="PROSITE-ProRule" id="PRU00042"/>
    </source>
</evidence>
<evidence type="ECO:0000256" key="3">
    <source>
        <dbReference type="SAM" id="MobiDB-lite"/>
    </source>
</evidence>
<evidence type="ECO:0000305" key="4"/>
<gene>
    <name type="primary">Klf14</name>
</gene>
<accession>Q19A41</accession>
<name>KLF14_MOUSE</name>
<protein>
    <recommendedName>
        <fullName>Krueppel-like factor 14</fullName>
    </recommendedName>
</protein>
<reference key="1">
    <citation type="submission" date="2006-05" db="EMBL/GenBank/DDBJ databases">
        <title>The centre for applied genomics genome annotation project.</title>
        <authorList>
            <person name="Parker-Katiraee L."/>
            <person name="Scherer S.W."/>
        </authorList>
    </citation>
    <scope>NUCLEOTIDE SEQUENCE [MRNA]</scope>
</reference>
<feature type="chain" id="PRO_0000294169" description="Krueppel-like factor 14">
    <location>
        <begin position="1"/>
        <end position="325"/>
    </location>
</feature>
<feature type="zinc finger region" description="C2H2-type 1" evidence="2">
    <location>
        <begin position="195"/>
        <end position="224"/>
    </location>
</feature>
<feature type="zinc finger region" description="C2H2-type 2" evidence="2">
    <location>
        <begin position="225"/>
        <end position="254"/>
    </location>
</feature>
<feature type="zinc finger region" description="C2H2-type 3" evidence="2">
    <location>
        <begin position="255"/>
        <end position="282"/>
    </location>
</feature>
<feature type="region of interest" description="Disordered" evidence="3">
    <location>
        <begin position="153"/>
        <end position="196"/>
    </location>
</feature>
<feature type="region of interest" description="Disordered" evidence="3">
    <location>
        <begin position="270"/>
        <end position="325"/>
    </location>
</feature>
<feature type="compositionally biased region" description="Acidic residues" evidence="3">
    <location>
        <begin position="155"/>
        <end position="165"/>
    </location>
</feature>
<feature type="compositionally biased region" description="Basic residues" evidence="3">
    <location>
        <begin position="183"/>
        <end position="196"/>
    </location>
</feature>
<feature type="compositionally biased region" description="Low complexity" evidence="3">
    <location>
        <begin position="306"/>
        <end position="316"/>
    </location>
</feature>
<proteinExistence type="evidence at transcript level"/>
<comment type="subcellular location">
    <subcellularLocation>
        <location evidence="1">Nucleus</location>
    </subcellularLocation>
</comment>
<comment type="similarity">
    <text evidence="4">Belongs to the Sp1 C2H2-type zinc-finger protein family.</text>
</comment>